<sequence>MTQTVNEREDPLNLGGGGWASSIPLRTWPSYHRRQRGAPMSKRRYRDGPKTEYEAPRKQPKQQHIPGPWFQPPRGPYWALYSNWGRCGGPWRPPLVAFQSPLCPAQMIRAYGLHPLCVCCCSCWNGPWNPGWERPPGRKKRWGRRGRGLRRHPRRSFPRNPPIDLSKMLRPVNLYGWRAPGMRAPRNTTQFIMNQVYEDMRQQEKLERQQAALRAHQAQAGGISPGDSTTNDAPQSGAEEDSQLPEDLYGFMQDPSLTFSPAPGQQNQSPTPGLVEEEEKNVDDDECDEEVCDEKEESEEEEVDGESEDEDVDEEEVEEAGNGEEREEDQEEEDVSEEAGLEEGEQREEDKFLPLGMPLSILVGDEEERENFMNYDYLSQEQIIPNVPEADLFMVPDISH</sequence>
<keyword id="KW-0175">Coiled coil</keyword>
<keyword id="KW-0221">Differentiation</keyword>
<keyword id="KW-0539">Nucleus</keyword>
<keyword id="KW-1185">Reference proteome</keyword>
<keyword id="KW-0744">Spermatogenesis</keyword>
<gene>
    <name type="primary">Ccer1</name>
</gene>
<evidence type="ECO:0000250" key="1">
    <source>
        <dbReference type="UniProtKB" id="Q9CQL2"/>
    </source>
</evidence>
<evidence type="ECO:0000255" key="2"/>
<evidence type="ECO:0000256" key="3">
    <source>
        <dbReference type="SAM" id="MobiDB-lite"/>
    </source>
</evidence>
<feature type="chain" id="PRO_0000288859" description="Coiled-coil domain-containing glutamate-rich protein 1">
    <location>
        <begin position="1"/>
        <end position="400"/>
    </location>
</feature>
<feature type="region of interest" description="Disordered" evidence="3">
    <location>
        <begin position="1"/>
        <end position="68"/>
    </location>
</feature>
<feature type="region of interest" description="Disordered" evidence="3">
    <location>
        <begin position="134"/>
        <end position="164"/>
    </location>
</feature>
<feature type="region of interest" description="Disordered" evidence="3">
    <location>
        <begin position="203"/>
        <end position="353"/>
    </location>
</feature>
<feature type="coiled-coil region" evidence="2">
    <location>
        <begin position="299"/>
        <end position="335"/>
    </location>
</feature>
<feature type="compositionally biased region" description="Basic and acidic residues" evidence="3">
    <location>
        <begin position="1"/>
        <end position="11"/>
    </location>
</feature>
<feature type="compositionally biased region" description="Basic residues" evidence="3">
    <location>
        <begin position="31"/>
        <end position="45"/>
    </location>
</feature>
<feature type="compositionally biased region" description="Basic and acidic residues" evidence="3">
    <location>
        <begin position="46"/>
        <end position="57"/>
    </location>
</feature>
<feature type="compositionally biased region" description="Basic residues" evidence="3">
    <location>
        <begin position="137"/>
        <end position="157"/>
    </location>
</feature>
<feature type="compositionally biased region" description="Low complexity" evidence="3">
    <location>
        <begin position="209"/>
        <end position="220"/>
    </location>
</feature>
<feature type="compositionally biased region" description="Polar residues" evidence="3">
    <location>
        <begin position="255"/>
        <end position="271"/>
    </location>
</feature>
<feature type="compositionally biased region" description="Acidic residues" evidence="3">
    <location>
        <begin position="275"/>
        <end position="347"/>
    </location>
</feature>
<reference key="1">
    <citation type="journal article" date="2004" name="Genome Res.">
        <title>The status, quality, and expansion of the NIH full-length cDNA project: the Mammalian Gene Collection (MGC).</title>
        <authorList>
            <consortium name="The MGC Project Team"/>
        </authorList>
    </citation>
    <scope>NUCLEOTIDE SEQUENCE [LARGE SCALE MRNA]</scope>
    <source>
        <tissue>Testis</tissue>
    </source>
</reference>
<accession>Q6AY45</accession>
<comment type="function">
    <text evidence="1">Regulator of histone epigenetic modifications and chromatin compaction into the sperm head, required for histone-to-protamine (HTP) transition. HTP is a key event in which somatic histones are first replaced by testis-specific histone variants, then transition proteins (TNPs) are incorporated into the spermatid nucleus, and finally protamines (PRMs) replace the TNPs to promote chromatin condensation.</text>
</comment>
<comment type="subcellular location">
    <subcellularLocation>
        <location evidence="1">Nucleus</location>
    </subcellularLocation>
    <text evidence="1">Forms condensates in the nucleus through liquid-liquid phase separation.</text>
</comment>
<protein>
    <recommendedName>
        <fullName>Coiled-coil domain-containing glutamate-rich protein 1</fullName>
    </recommendedName>
</protein>
<proteinExistence type="evidence at transcript level"/>
<organism>
    <name type="scientific">Rattus norvegicus</name>
    <name type="common">Rat</name>
    <dbReference type="NCBI Taxonomy" id="10116"/>
    <lineage>
        <taxon>Eukaryota</taxon>
        <taxon>Metazoa</taxon>
        <taxon>Chordata</taxon>
        <taxon>Craniata</taxon>
        <taxon>Vertebrata</taxon>
        <taxon>Euteleostomi</taxon>
        <taxon>Mammalia</taxon>
        <taxon>Eutheria</taxon>
        <taxon>Euarchontoglires</taxon>
        <taxon>Glires</taxon>
        <taxon>Rodentia</taxon>
        <taxon>Myomorpha</taxon>
        <taxon>Muroidea</taxon>
        <taxon>Muridae</taxon>
        <taxon>Murinae</taxon>
        <taxon>Rattus</taxon>
    </lineage>
</organism>
<name>CCER1_RAT</name>
<dbReference type="EMBL" id="BC079199">
    <property type="protein sequence ID" value="AAH79199.1"/>
    <property type="molecule type" value="mRNA"/>
</dbReference>
<dbReference type="RefSeq" id="NP_001020223.1">
    <property type="nucleotide sequence ID" value="NM_001025052.1"/>
</dbReference>
<dbReference type="RefSeq" id="XP_038935667.1">
    <property type="nucleotide sequence ID" value="XM_039079739.2"/>
</dbReference>
<dbReference type="RefSeq" id="XP_038935668.1">
    <property type="nucleotide sequence ID" value="XM_039079740.2"/>
</dbReference>
<dbReference type="SMR" id="Q6AY45"/>
<dbReference type="FunCoup" id="Q6AY45">
    <property type="interactions" value="4"/>
</dbReference>
<dbReference type="STRING" id="10116.ENSRNOP00000006455"/>
<dbReference type="GlyGen" id="Q6AY45">
    <property type="glycosylation" value="1 site"/>
</dbReference>
<dbReference type="PhosphoSitePlus" id="Q6AY45"/>
<dbReference type="PaxDb" id="10116-ENSRNOP00000006455"/>
<dbReference type="Ensembl" id="ENSRNOT00000006455.4">
    <property type="protein sequence ID" value="ENSRNOP00000006455.3"/>
    <property type="gene ID" value="ENSRNOG00000004875.4"/>
</dbReference>
<dbReference type="GeneID" id="500825"/>
<dbReference type="KEGG" id="rno:500825"/>
<dbReference type="UCSC" id="RGD:1560042">
    <property type="organism name" value="rat"/>
</dbReference>
<dbReference type="AGR" id="RGD:1560042"/>
<dbReference type="CTD" id="196477"/>
<dbReference type="RGD" id="1560042">
    <property type="gene designation" value="Ccer1"/>
</dbReference>
<dbReference type="eggNOG" id="ENOG502S11C">
    <property type="taxonomic scope" value="Eukaryota"/>
</dbReference>
<dbReference type="GeneTree" id="ENSGT00730000111529"/>
<dbReference type="HOGENOM" id="CLU_794441_0_0_1"/>
<dbReference type="InParanoid" id="Q6AY45"/>
<dbReference type="OMA" id="PLCFCCC"/>
<dbReference type="OrthoDB" id="9451863at2759"/>
<dbReference type="PhylomeDB" id="Q6AY45"/>
<dbReference type="PRO" id="PR:Q6AY45"/>
<dbReference type="Proteomes" id="UP000002494">
    <property type="component" value="Chromosome 7"/>
</dbReference>
<dbReference type="Bgee" id="ENSRNOG00000004875">
    <property type="expression patterns" value="Expressed in testis"/>
</dbReference>
<dbReference type="GO" id="GO:0005634">
    <property type="term" value="C:nucleus"/>
    <property type="evidence" value="ECO:0000250"/>
    <property type="project" value="UniProtKB"/>
</dbReference>
<dbReference type="GO" id="GO:0035092">
    <property type="term" value="P:sperm DNA condensation"/>
    <property type="evidence" value="ECO:0000250"/>
    <property type="project" value="UniProtKB"/>
</dbReference>
<dbReference type="GO" id="GO:0007283">
    <property type="term" value="P:spermatogenesis"/>
    <property type="evidence" value="ECO:0000250"/>
    <property type="project" value="UniProtKB"/>
</dbReference>
<dbReference type="InterPro" id="IPR027889">
    <property type="entry name" value="CCER1"/>
</dbReference>
<dbReference type="InterPro" id="IPR052696">
    <property type="entry name" value="Coiled-coil_domain"/>
</dbReference>
<dbReference type="PANTHER" id="PTHR37337">
    <property type="entry name" value="COILED-COIL DOMAIN-CONTAINING GLUTAMATE-RICH PROTEIN 1"/>
    <property type="match status" value="1"/>
</dbReference>
<dbReference type="PANTHER" id="PTHR37337:SF1">
    <property type="entry name" value="COILED-COIL DOMAIN-CONTAINING GLUTAMATE-RICH PROTEIN 1"/>
    <property type="match status" value="1"/>
</dbReference>
<dbReference type="Pfam" id="PF15482">
    <property type="entry name" value="CCER1"/>
    <property type="match status" value="1"/>
</dbReference>